<accession>Q9U3K5</accession>
<accession>Q9BMT8</accession>
<sequence length="419" mass="48882">MLGFFGPLYEQLVGMLRKQQGQLAFDTIDRVNAWFTPFVLVAMTLAISCKQYFGQPIKCWTPREFSGSWDGYVHDFCFIENTYFVPNGTEVTDEARGGRHINYYRWVPLVLLFQAAMFVLPYHLWNLFHKRTTINLKGSLRFFEGALKKLEPAQACESFAGEIWNRLSDIRNSSNKLYGFQATINYFLLKLGFIVNCILQMVLLKHFLDVDDYFWGFFHLWNVEFKGTAEKEDSIFPRIVLCDFKVRNLGQQHQHTVSCIMILNMIIEKLYICFYFWLIFVFVVTTAGMIHFAFQILFRRHSLIPTNLNNKNKMNPTRSHEFIKDYLNFDGCLLLTYVDAQFGAFRTSQVIDGLVHRFTNELDSDSSAVTSLNEDHPERYVAFNTDTIPMDRYARKHHSLIEEVDGPSAPPANEEKKEI</sequence>
<keyword id="KW-0965">Cell junction</keyword>
<keyword id="KW-1003">Cell membrane</keyword>
<keyword id="KW-0303">Gap junction</keyword>
<keyword id="KW-0407">Ion channel</keyword>
<keyword id="KW-0406">Ion transport</keyword>
<keyword id="KW-0472">Membrane</keyword>
<keyword id="KW-1185">Reference proteome</keyword>
<keyword id="KW-0812">Transmembrane</keyword>
<keyword id="KW-1133">Transmembrane helix</keyword>
<keyword id="KW-0813">Transport</keyword>
<feature type="chain" id="PRO_0000208505" description="Innexin-2">
    <location>
        <begin position="1"/>
        <end position="419"/>
    </location>
</feature>
<feature type="transmembrane region" description="Helical" evidence="2">
    <location>
        <begin position="33"/>
        <end position="53"/>
    </location>
</feature>
<feature type="transmembrane region" description="Helical" evidence="2">
    <location>
        <begin position="108"/>
        <end position="128"/>
    </location>
</feature>
<feature type="transmembrane region" description="Helical" evidence="2">
    <location>
        <begin position="184"/>
        <end position="204"/>
    </location>
</feature>
<feature type="transmembrane region" description="Helical" evidence="2">
    <location>
        <begin position="270"/>
        <end position="290"/>
    </location>
</feature>
<name>INX2_CAEEL</name>
<dbReference type="EMBL" id="Z66561">
    <property type="protein sequence ID" value="CAB54206.2"/>
    <property type="molecule type" value="Genomic_DNA"/>
</dbReference>
<dbReference type="EMBL" id="AF304127">
    <property type="protein sequence ID" value="AAG50240.1"/>
    <property type="molecule type" value="mRNA"/>
</dbReference>
<dbReference type="PIR" id="T20594">
    <property type="entry name" value="T20594"/>
</dbReference>
<dbReference type="RefSeq" id="NP_509885.1">
    <property type="nucleotide sequence ID" value="NM_077484.6"/>
</dbReference>
<dbReference type="SMR" id="Q9U3K5"/>
<dbReference type="BioGRID" id="46228">
    <property type="interactions" value="2"/>
</dbReference>
<dbReference type="FunCoup" id="Q9U3K5">
    <property type="interactions" value="139"/>
</dbReference>
<dbReference type="STRING" id="6239.F08G12.10.2"/>
<dbReference type="PaxDb" id="6239-F08G12.10"/>
<dbReference type="PeptideAtlas" id="Q9U3K5"/>
<dbReference type="EnsemblMetazoa" id="F08G12.10.1">
    <property type="protein sequence ID" value="F08G12.10.1"/>
    <property type="gene ID" value="WBGene00002124"/>
</dbReference>
<dbReference type="GeneID" id="181318"/>
<dbReference type="KEGG" id="cel:CELE_F08G12.10"/>
<dbReference type="UCSC" id="F08G12.10">
    <property type="organism name" value="c. elegans"/>
</dbReference>
<dbReference type="AGR" id="WB:WBGene00002124"/>
<dbReference type="CTD" id="181318"/>
<dbReference type="WormBase" id="F08G12.10">
    <property type="protein sequence ID" value="CE26709"/>
    <property type="gene ID" value="WBGene00002124"/>
    <property type="gene designation" value="inx-2"/>
</dbReference>
<dbReference type="eggNOG" id="ENOG502S565">
    <property type="taxonomic scope" value="Eukaryota"/>
</dbReference>
<dbReference type="HOGENOM" id="CLU_035763_0_1_1"/>
<dbReference type="InParanoid" id="Q9U3K5"/>
<dbReference type="OMA" id="HINYYRW"/>
<dbReference type="OrthoDB" id="5867527at2759"/>
<dbReference type="PhylomeDB" id="Q9U3K5"/>
<dbReference type="PRO" id="PR:Q9U3K5"/>
<dbReference type="Proteomes" id="UP000001940">
    <property type="component" value="Chromosome X"/>
</dbReference>
<dbReference type="Bgee" id="WBGene00002124">
    <property type="expression patterns" value="Expressed in embryo and 4 other cell types or tissues"/>
</dbReference>
<dbReference type="GO" id="GO:0005921">
    <property type="term" value="C:gap junction"/>
    <property type="evidence" value="ECO:0000250"/>
    <property type="project" value="UniProtKB"/>
</dbReference>
<dbReference type="GO" id="GO:0005886">
    <property type="term" value="C:plasma membrane"/>
    <property type="evidence" value="ECO:0000250"/>
    <property type="project" value="UniProtKB"/>
</dbReference>
<dbReference type="GO" id="GO:0005243">
    <property type="term" value="F:gap junction channel activity"/>
    <property type="evidence" value="ECO:0000250"/>
    <property type="project" value="UniProtKB"/>
</dbReference>
<dbReference type="GO" id="GO:0055077">
    <property type="term" value="F:gap junction hemi-channel activity"/>
    <property type="evidence" value="ECO:0000250"/>
    <property type="project" value="UniProtKB"/>
</dbReference>
<dbReference type="GO" id="GO:0034220">
    <property type="term" value="P:monoatomic ion transmembrane transport"/>
    <property type="evidence" value="ECO:0007669"/>
    <property type="project" value="UniProtKB-KW"/>
</dbReference>
<dbReference type="InterPro" id="IPR000990">
    <property type="entry name" value="Innexin"/>
</dbReference>
<dbReference type="PANTHER" id="PTHR11893">
    <property type="entry name" value="INNEXIN"/>
    <property type="match status" value="1"/>
</dbReference>
<dbReference type="PANTHER" id="PTHR11893:SF28">
    <property type="entry name" value="INNEXIN-2"/>
    <property type="match status" value="1"/>
</dbReference>
<dbReference type="Pfam" id="PF00876">
    <property type="entry name" value="Innexin"/>
    <property type="match status" value="1"/>
</dbReference>
<dbReference type="PRINTS" id="PR01262">
    <property type="entry name" value="INNEXIN"/>
</dbReference>
<dbReference type="PROSITE" id="PS51013">
    <property type="entry name" value="PANNEXIN"/>
    <property type="match status" value="1"/>
</dbReference>
<organism>
    <name type="scientific">Caenorhabditis elegans</name>
    <dbReference type="NCBI Taxonomy" id="6239"/>
    <lineage>
        <taxon>Eukaryota</taxon>
        <taxon>Metazoa</taxon>
        <taxon>Ecdysozoa</taxon>
        <taxon>Nematoda</taxon>
        <taxon>Chromadorea</taxon>
        <taxon>Rhabditida</taxon>
        <taxon>Rhabditina</taxon>
        <taxon>Rhabditomorpha</taxon>
        <taxon>Rhabditoidea</taxon>
        <taxon>Rhabditidae</taxon>
        <taxon>Peloderinae</taxon>
        <taxon>Caenorhabditis</taxon>
    </lineage>
</organism>
<gene>
    <name type="primary">inx-2</name>
    <name type="synonym">opu-2</name>
    <name type="ORF">F08G12.10</name>
</gene>
<protein>
    <recommendedName>
        <fullName>Innexin-2</fullName>
    </recommendedName>
    <alternativeName>
        <fullName>Protein opu-2</fullName>
    </alternativeName>
</protein>
<proteinExistence type="evidence at transcript level"/>
<comment type="function">
    <text evidence="1">Structural component of the gap junctions.</text>
</comment>
<comment type="subcellular location">
    <subcellularLocation>
        <location evidence="3">Cell membrane</location>
        <topology evidence="2">Multi-pass membrane protein</topology>
    </subcellularLocation>
    <subcellularLocation>
        <location>Cell junction</location>
        <location>Gap junction</location>
    </subcellularLocation>
</comment>
<comment type="similarity">
    <text evidence="2">Belongs to the pannexin family.</text>
</comment>
<evidence type="ECO:0000250" key="1">
    <source>
        <dbReference type="UniProtKB" id="O61715"/>
    </source>
</evidence>
<evidence type="ECO:0000255" key="2">
    <source>
        <dbReference type="PROSITE-ProRule" id="PRU00351"/>
    </source>
</evidence>
<evidence type="ECO:0000305" key="3"/>
<reference key="1">
    <citation type="journal article" date="1998" name="Science">
        <title>Genome sequence of the nematode C. elegans: a platform for investigating biology.</title>
        <authorList>
            <consortium name="The C. elegans sequencing consortium"/>
        </authorList>
    </citation>
    <scope>NUCLEOTIDE SEQUENCE [LARGE SCALE GENOMIC DNA]</scope>
    <source>
        <strain>Bristol N2</strain>
    </source>
</reference>
<reference key="2">
    <citation type="submission" date="2000-09" db="EMBL/GenBank/DDBJ databases">
        <title>The Caenorhabditis elegans transcriptome project, a complementary view of the genome.</title>
        <authorList>
            <person name="Kohara Y."/>
            <person name="Shin-i T."/>
            <person name="Suzuki Y."/>
            <person name="Sugano S."/>
            <person name="Potdevin M."/>
            <person name="Thierry-Mieg Y."/>
            <person name="Thierry-Mieg D."/>
            <person name="Thierry-Mieg J."/>
        </authorList>
    </citation>
    <scope>NUCLEOTIDE SEQUENCE [LARGE SCALE MRNA]</scope>
    <source>
        <strain>Bristol N2</strain>
    </source>
</reference>